<evidence type="ECO:0000250" key="1">
    <source>
        <dbReference type="UniProtKB" id="A8MT69"/>
    </source>
</evidence>
<evidence type="ECO:0000305" key="2"/>
<name>CENPX_BOVIN</name>
<comment type="function">
    <text evidence="1">DNA-binding component of the Fanconi anemia (FA) core complex. Required for the normal activation of the FA pathway, leading to monoubiquitination of the FANCI-FANCD2 complex in response to DNA damage, cellular resistance to DNA cross-linking drugs, and prevention of chromosomal breakage. In complex with CENPS (MHF heterodimer), crucial cofactor for FANCM in both binding and ATP-dependent remodeling of DNA. Stabilizes FANCM. In complex with CENPS and FANCM (but not other FANC proteins), rapidly recruited to blocked forks and promotes gene conversion at blocked replication forks. In complex with CENPS, CENPT and CENPW (CENP-T-W-S-X heterotetramer), involved in the formation of a functional kinetochore outer plate, which is essential for kinetochore-microtubule attachment and faithful mitotic progression. As a component of MHF and CENP-T-W-S-X complexes, binds DNA and bends it to form a nucleosome-like structure. DNA-binding function is fulfilled in the presence of CENPS, with the following preference for DNA substates: Holliday junction &gt; double-stranded &gt; splay arm &gt; single-stranded. Does not bind DNA on its own.</text>
</comment>
<comment type="subunit">
    <text evidence="1">Heterodimer with CENPX, sometimes called MHF; this interaction stabilizes both partners. MHF heterodimers can assemble to form tetrameric structures. MHF also coassemble with CENPT-CENPW heterodimers at centromeres to form the tetrameric CENP-T-W-S-X complex. Forms a discrete complex with FANCM and CENPX, called FANCM-MHF; this interaction, probably mediated by direct binding between CENPS and FANCM, leads to synergistic activation of double-stranded DNA binding and strongly stimulates FANCM-mediated DNA remodeling. Recruited by FANCM to the Fanconi anemia (FA) core complex, which consists of CENPS, CENPX, FANCA, FANCB, FANCC, FANCE, FANCF, FANCG, FANCL, FANCM, FAAP24 and FAAP100. The FA core complex associates with Bloom syndrome (BLM) complex, which consists of at least BLM, DNA topoisomerase 3-alpha (TOP3A), RMI1/BLAP75, RPA1/RPA70 and RPA2/RPA32. The super complex between FA and BLM is called BRAFT.</text>
</comment>
<comment type="subcellular location">
    <subcellularLocation>
        <location evidence="1">Nucleus</location>
    </subcellularLocation>
    <subcellularLocation>
        <location evidence="1">Chromosome</location>
        <location evidence="1">Centromere</location>
    </subcellularLocation>
    <subcellularLocation>
        <location evidence="1">Chromosome</location>
        <location evidence="1">Centromere</location>
        <location evidence="1">Kinetochore</location>
    </subcellularLocation>
    <text evidence="1">Assembly of CENPS and CENPX and its partner subunits CENPT and CENPW at centromeres occurs through a dynamic exchange mechanism. Although exchange is continuous in the cell cycle, de novo assembly starts principally during mid-late S phase and is complete by G2. CENPX being less stably bound at the kinetochore than CENPS.</text>
</comment>
<comment type="similarity">
    <text evidence="2">Belongs to the CENP-X/MHF2 family.</text>
</comment>
<reference key="1">
    <citation type="submission" date="2006-01" db="EMBL/GenBank/DDBJ databases">
        <authorList>
            <consortium name="NIH - Mammalian Gene Collection (MGC) project"/>
        </authorList>
    </citation>
    <scope>NUCLEOTIDE SEQUENCE [LARGE SCALE MRNA]</scope>
    <source>
        <strain>Hereford</strain>
        <tissue>Testis</tissue>
    </source>
</reference>
<protein>
    <recommendedName>
        <fullName>Centromere protein X</fullName>
        <shortName>CENP-X</shortName>
    </recommendedName>
    <alternativeName>
        <fullName>FANCM-interacting histone fold protein 2</fullName>
    </alternativeName>
    <alternativeName>
        <fullName>Fanconi anemia-associated polypeptide of 10 kDa</fullName>
    </alternativeName>
    <alternativeName>
        <fullName>Stimulated by retinoic acid gene 13 protein homolog</fullName>
    </alternativeName>
</protein>
<proteinExistence type="inferred from homology"/>
<dbReference type="EMBL" id="BC111642">
    <property type="protein sequence ID" value="AAI11643.1"/>
    <property type="molecule type" value="mRNA"/>
</dbReference>
<dbReference type="RefSeq" id="NP_001107999.1">
    <property type="nucleotide sequence ID" value="NM_001114527.2"/>
</dbReference>
<dbReference type="SMR" id="Q2NKU0"/>
<dbReference type="FunCoup" id="Q2NKU0">
    <property type="interactions" value="600"/>
</dbReference>
<dbReference type="STRING" id="9913.ENSBTAP00000005369"/>
<dbReference type="PaxDb" id="9913-ENSBTAP00000005369"/>
<dbReference type="GeneID" id="618018"/>
<dbReference type="KEGG" id="bta:618018"/>
<dbReference type="CTD" id="201254"/>
<dbReference type="VEuPathDB" id="HostDB:ENSBTAG00000004108"/>
<dbReference type="eggNOG" id="ENOG502S98G">
    <property type="taxonomic scope" value="Eukaryota"/>
</dbReference>
<dbReference type="HOGENOM" id="CLU_175684_0_0_1"/>
<dbReference type="InParanoid" id="Q2NKU0"/>
<dbReference type="OMA" id="FKAKTIQ"/>
<dbReference type="OrthoDB" id="2500381at2759"/>
<dbReference type="TreeFam" id="TF330764"/>
<dbReference type="Reactome" id="R-BTA-606279">
    <property type="pathway name" value="Deposition of new CENPA-containing nucleosomes at the centromere"/>
</dbReference>
<dbReference type="Reactome" id="R-BTA-6783310">
    <property type="pathway name" value="Fanconi Anemia Pathway"/>
</dbReference>
<dbReference type="Reactome" id="R-BTA-9833482">
    <property type="pathway name" value="PKR-mediated signaling"/>
</dbReference>
<dbReference type="Proteomes" id="UP000009136">
    <property type="component" value="Chromosome 19"/>
</dbReference>
<dbReference type="Bgee" id="ENSBTAG00000004108">
    <property type="expression patterns" value="Expressed in tongue muscle and 105 other cell types or tissues"/>
</dbReference>
<dbReference type="GO" id="GO:0000785">
    <property type="term" value="C:chromatin"/>
    <property type="evidence" value="ECO:0007669"/>
    <property type="project" value="Ensembl"/>
</dbReference>
<dbReference type="GO" id="GO:0071821">
    <property type="term" value="C:FANCM-MHF complex"/>
    <property type="evidence" value="ECO:0000250"/>
    <property type="project" value="UniProtKB"/>
</dbReference>
<dbReference type="GO" id="GO:0043240">
    <property type="term" value="C:Fanconi anaemia nuclear complex"/>
    <property type="evidence" value="ECO:0000318"/>
    <property type="project" value="GO_Central"/>
</dbReference>
<dbReference type="GO" id="GO:0000939">
    <property type="term" value="C:inner kinetochore"/>
    <property type="evidence" value="ECO:0007669"/>
    <property type="project" value="Ensembl"/>
</dbReference>
<dbReference type="GO" id="GO:0003690">
    <property type="term" value="F:double-stranded DNA binding"/>
    <property type="evidence" value="ECO:0007669"/>
    <property type="project" value="Ensembl"/>
</dbReference>
<dbReference type="GO" id="GO:0051301">
    <property type="term" value="P:cell division"/>
    <property type="evidence" value="ECO:0007669"/>
    <property type="project" value="UniProtKB-KW"/>
</dbReference>
<dbReference type="GO" id="GO:0036297">
    <property type="term" value="P:interstrand cross-link repair"/>
    <property type="evidence" value="ECO:0007669"/>
    <property type="project" value="Ensembl"/>
</dbReference>
<dbReference type="GO" id="GO:0051382">
    <property type="term" value="P:kinetochore assembly"/>
    <property type="evidence" value="ECO:0007669"/>
    <property type="project" value="InterPro"/>
</dbReference>
<dbReference type="GO" id="GO:0031297">
    <property type="term" value="P:replication fork processing"/>
    <property type="evidence" value="ECO:0000250"/>
    <property type="project" value="UniProtKB"/>
</dbReference>
<dbReference type="GO" id="GO:0000712">
    <property type="term" value="P:resolution of meiotic recombination intermediates"/>
    <property type="evidence" value="ECO:0000250"/>
    <property type="project" value="UniProtKB"/>
</dbReference>
<dbReference type="CDD" id="cd22921">
    <property type="entry name" value="HFD_CENP-X"/>
    <property type="match status" value="1"/>
</dbReference>
<dbReference type="FunFam" id="1.20.5.4980:FF:000001">
    <property type="entry name" value="Centromere protein X"/>
    <property type="match status" value="1"/>
</dbReference>
<dbReference type="Gene3D" id="1.20.5.4980">
    <property type="match status" value="1"/>
</dbReference>
<dbReference type="Gene3D" id="6.10.130.30">
    <property type="match status" value="1"/>
</dbReference>
<dbReference type="InterPro" id="IPR018552">
    <property type="entry name" value="CENP-X"/>
</dbReference>
<dbReference type="PANTHER" id="PTHR28680">
    <property type="entry name" value="CENTROMERE PROTEIN X"/>
    <property type="match status" value="1"/>
</dbReference>
<dbReference type="PANTHER" id="PTHR28680:SF1">
    <property type="entry name" value="CENTROMERE PROTEIN X"/>
    <property type="match status" value="1"/>
</dbReference>
<dbReference type="Pfam" id="PF09415">
    <property type="entry name" value="CENP-X"/>
    <property type="match status" value="1"/>
</dbReference>
<organism>
    <name type="scientific">Bos taurus</name>
    <name type="common">Bovine</name>
    <dbReference type="NCBI Taxonomy" id="9913"/>
    <lineage>
        <taxon>Eukaryota</taxon>
        <taxon>Metazoa</taxon>
        <taxon>Chordata</taxon>
        <taxon>Craniata</taxon>
        <taxon>Vertebrata</taxon>
        <taxon>Euteleostomi</taxon>
        <taxon>Mammalia</taxon>
        <taxon>Eutheria</taxon>
        <taxon>Laurasiatheria</taxon>
        <taxon>Artiodactyla</taxon>
        <taxon>Ruminantia</taxon>
        <taxon>Pecora</taxon>
        <taxon>Bovidae</taxon>
        <taxon>Bovinae</taxon>
        <taxon>Bos</taxon>
    </lineage>
</organism>
<sequence length="79" mass="8879">MEETGAVFRKELVSKLLHLHFKDKKTKVSGDALQLVAELLKIFVVEAAIRSVRQAQAEGLAHVDVEQLEKVLPQLLLDF</sequence>
<accession>Q2NKU0</accession>
<keyword id="KW-0007">Acetylation</keyword>
<keyword id="KW-0131">Cell cycle</keyword>
<keyword id="KW-0132">Cell division</keyword>
<keyword id="KW-0137">Centromere</keyword>
<keyword id="KW-0158">Chromosome</keyword>
<keyword id="KW-0227">DNA damage</keyword>
<keyword id="KW-0234">DNA repair</keyword>
<keyword id="KW-0238">DNA-binding</keyword>
<keyword id="KW-0995">Kinetochore</keyword>
<keyword id="KW-0498">Mitosis</keyword>
<keyword id="KW-0539">Nucleus</keyword>
<keyword id="KW-1185">Reference proteome</keyword>
<feature type="chain" id="PRO_0000337179" description="Centromere protein X">
    <location>
        <begin position="1"/>
        <end position="79"/>
    </location>
</feature>
<feature type="modified residue" description="N-acetylmethionine" evidence="1">
    <location>
        <position position="1"/>
    </location>
</feature>
<gene>
    <name type="primary">CENPX</name>
    <name type="synonym">FAAP10</name>
    <name type="synonym">MHF2</name>
    <name type="synonym">STRA13</name>
</gene>